<organism>
    <name type="scientific">Thermococcus onnurineus (strain NA1)</name>
    <dbReference type="NCBI Taxonomy" id="523850"/>
    <lineage>
        <taxon>Archaea</taxon>
        <taxon>Methanobacteriati</taxon>
        <taxon>Methanobacteriota</taxon>
        <taxon>Thermococci</taxon>
        <taxon>Thermococcales</taxon>
        <taxon>Thermococcaceae</taxon>
        <taxon>Thermococcus</taxon>
    </lineage>
</organism>
<gene>
    <name type="ordered locus">TON_1363</name>
</gene>
<sequence>MRVIPLASESLGVRSLATFVEASGIKILIDPGVALGPKRYGLPPAKAEMEVLQKMRRKLQGYARRSEVVVISHYHYDHHTPFFEGLYESSSESYAREIYEGKPLFIKHPRENINFSQRKRAWAFLKNTEPIAGKIEFADGKSFDLGGVELEFSPAVPHGSEGSRLGFVVMTLIDDGSKRVIHASDIQMLNRKSVEWIIEKVPDLLITGGPPTYLGKRAEGSWQAGIKNLNEIIRETGAEIILDHHIIRDKNYPRFFDELEEIPKTFAGYLKVEDRPLEAYRRELHKIEKGGEAEIPFKLS</sequence>
<feature type="chain" id="PRO_1000145506" description="UPF0282 protein TON_1363">
    <location>
        <begin position="1"/>
        <end position="300"/>
    </location>
</feature>
<accession>B6YXP0</accession>
<name>Y1363_THEON</name>
<evidence type="ECO:0000255" key="1">
    <source>
        <dbReference type="HAMAP-Rule" id="MF_01406"/>
    </source>
</evidence>
<reference key="1">
    <citation type="journal article" date="2008" name="J. Bacteriol.">
        <title>The complete genome sequence of Thermococcus onnurineus NA1 reveals a mixed heterotrophic and carboxydotrophic metabolism.</title>
        <authorList>
            <person name="Lee H.S."/>
            <person name="Kang S.G."/>
            <person name="Bae S.S."/>
            <person name="Lim J.K."/>
            <person name="Cho Y."/>
            <person name="Kim Y.J."/>
            <person name="Jeon J.H."/>
            <person name="Cha S.-S."/>
            <person name="Kwon K.K."/>
            <person name="Kim H.-T."/>
            <person name="Park C.-J."/>
            <person name="Lee H.-W."/>
            <person name="Kim S.I."/>
            <person name="Chun J."/>
            <person name="Colwell R.R."/>
            <person name="Kim S.-J."/>
            <person name="Lee J.-H."/>
        </authorList>
    </citation>
    <scope>NUCLEOTIDE SEQUENCE [LARGE SCALE GENOMIC DNA]</scope>
    <source>
        <strain>NA1</strain>
    </source>
</reference>
<comment type="similarity">
    <text evidence="1">Belongs to the UPF0282 family.</text>
</comment>
<dbReference type="EMBL" id="CP000855">
    <property type="protein sequence ID" value="ACJ16853.1"/>
    <property type="molecule type" value="Genomic_DNA"/>
</dbReference>
<dbReference type="RefSeq" id="WP_012572325.1">
    <property type="nucleotide sequence ID" value="NC_011529.1"/>
</dbReference>
<dbReference type="STRING" id="523850.TON_1363"/>
<dbReference type="GeneID" id="7018392"/>
<dbReference type="KEGG" id="ton:TON_1363"/>
<dbReference type="PATRIC" id="fig|523850.10.peg.1372"/>
<dbReference type="eggNOG" id="arCOG00969">
    <property type="taxonomic scope" value="Archaea"/>
</dbReference>
<dbReference type="HOGENOM" id="CLU_079268_0_0_2"/>
<dbReference type="OrthoDB" id="21331at2157"/>
<dbReference type="Proteomes" id="UP000002727">
    <property type="component" value="Chromosome"/>
</dbReference>
<dbReference type="Gene3D" id="3.60.15.10">
    <property type="entry name" value="Ribonuclease Z/Hydroxyacylglutathione hydrolase-like"/>
    <property type="match status" value="1"/>
</dbReference>
<dbReference type="HAMAP" id="MF_01406">
    <property type="entry name" value="UPF0282"/>
    <property type="match status" value="1"/>
</dbReference>
<dbReference type="InterPro" id="IPR001279">
    <property type="entry name" value="Metallo-B-lactamas"/>
</dbReference>
<dbReference type="InterPro" id="IPR036866">
    <property type="entry name" value="RibonucZ/Hydroxyglut_hydro"/>
</dbReference>
<dbReference type="InterPro" id="IPR050114">
    <property type="entry name" value="UPF0173_UPF0282_UlaG_hydrolase"/>
</dbReference>
<dbReference type="InterPro" id="IPR014426">
    <property type="entry name" value="UPF0282_hydrls"/>
</dbReference>
<dbReference type="NCBIfam" id="NF003290">
    <property type="entry name" value="PRK04286.1-6"/>
    <property type="match status" value="1"/>
</dbReference>
<dbReference type="PANTHER" id="PTHR43546">
    <property type="entry name" value="UPF0173 METAL-DEPENDENT HYDROLASE MJ1163-RELATED"/>
    <property type="match status" value="1"/>
</dbReference>
<dbReference type="PANTHER" id="PTHR43546:SF4">
    <property type="entry name" value="UPF0282 PROTEIN MJ1629"/>
    <property type="match status" value="1"/>
</dbReference>
<dbReference type="Pfam" id="PF12706">
    <property type="entry name" value="Lactamase_B_2"/>
    <property type="match status" value="1"/>
</dbReference>
<dbReference type="PIRSF" id="PIRSF004944">
    <property type="entry name" value="UCP004944_hydrls"/>
    <property type="match status" value="1"/>
</dbReference>
<dbReference type="SUPFAM" id="SSF56281">
    <property type="entry name" value="Metallo-hydrolase/oxidoreductase"/>
    <property type="match status" value="1"/>
</dbReference>
<protein>
    <recommendedName>
        <fullName evidence="1">UPF0282 protein TON_1363</fullName>
    </recommendedName>
</protein>
<proteinExistence type="inferred from homology"/>